<protein>
    <recommendedName>
        <fullName evidence="5">Glycine/sarcosine N-methyltransferase</fullName>
        <shortName evidence="4 5">GSMT</shortName>
        <ecNumber evidence="2 3">2.1.1.156</ecNumber>
    </recommendedName>
</protein>
<name>GSMT_HALHR</name>
<feature type="chain" id="PRO_0000413611" description="Glycine/sarcosine N-methyltransferase">
    <location>
        <begin position="1"/>
        <end position="268"/>
    </location>
</feature>
<feature type="binding site" evidence="1">
    <location>
        <position position="26"/>
    </location>
    <ligand>
        <name>S-adenosyl-L-methionine</name>
        <dbReference type="ChEBI" id="CHEBI:59789"/>
    </ligand>
</feature>
<feature type="binding site" evidence="1">
    <location>
        <position position="34"/>
    </location>
    <ligand>
        <name>S-adenosyl-L-methionine</name>
        <dbReference type="ChEBI" id="CHEBI:59789"/>
    </ligand>
</feature>
<feature type="binding site" evidence="1">
    <location>
        <position position="43"/>
    </location>
    <ligand>
        <name>S-adenosyl-L-methionine</name>
        <dbReference type="ChEBI" id="CHEBI:59789"/>
    </ligand>
</feature>
<feature type="binding site" evidence="1">
    <location>
        <position position="67"/>
    </location>
    <ligand>
        <name>S-adenosyl-L-methionine</name>
        <dbReference type="ChEBI" id="CHEBI:59789"/>
    </ligand>
</feature>
<feature type="binding site" evidence="1">
    <location>
        <position position="88"/>
    </location>
    <ligand>
        <name>S-adenosyl-L-methionine</name>
        <dbReference type="ChEBI" id="CHEBI:59789"/>
    </ligand>
</feature>
<feature type="binding site" evidence="1">
    <location>
        <begin position="114"/>
        <end position="115"/>
    </location>
    <ligand>
        <name>S-adenosyl-L-methionine</name>
        <dbReference type="ChEBI" id="CHEBI:59789"/>
    </ligand>
</feature>
<feature type="binding site" evidence="1">
    <location>
        <position position="132"/>
    </location>
    <ligand>
        <name>S-adenosyl-L-methionine</name>
        <dbReference type="ChEBI" id="CHEBI:59789"/>
    </ligand>
</feature>
<feature type="binding site" evidence="1">
    <location>
        <position position="134"/>
    </location>
    <ligand>
        <name>substrate</name>
    </ligand>
</feature>
<feature type="binding site" evidence="1">
    <location>
        <position position="167"/>
    </location>
    <ligand>
        <name>substrate</name>
    </ligand>
</feature>
<feature type="binding site" evidence="1">
    <location>
        <position position="206"/>
    </location>
    <ligand>
        <name>substrate</name>
    </ligand>
</feature>
<proteinExistence type="evidence at protein level"/>
<organism>
    <name type="scientific">Halorhodospira halochloris</name>
    <name type="common">Ectothiorhodospira halochloris</name>
    <dbReference type="NCBI Taxonomy" id="1052"/>
    <lineage>
        <taxon>Bacteria</taxon>
        <taxon>Pseudomonadati</taxon>
        <taxon>Pseudomonadota</taxon>
        <taxon>Gammaproteobacteria</taxon>
        <taxon>Chromatiales</taxon>
        <taxon>Ectothiorhodospiraceae</taxon>
        <taxon>Halorhodospira</taxon>
    </lineage>
</organism>
<evidence type="ECO:0000255" key="1">
    <source>
        <dbReference type="PROSITE-ProRule" id="PRU00932"/>
    </source>
</evidence>
<evidence type="ECO:0000269" key="2">
    <source>
    </source>
</evidence>
<evidence type="ECO:0000269" key="3">
    <source>
    </source>
</evidence>
<evidence type="ECO:0000303" key="4">
    <source>
    </source>
</evidence>
<evidence type="ECO:0000303" key="5">
    <source>
    </source>
</evidence>
<evidence type="ECO:0000305" key="6">
    <source>
    </source>
</evidence>
<comment type="function">
    <text evidence="2 3">Catalyzes the methylation of glycine and sarcosine to sarcosine and dimethylglycine, respectively, with S-adenosylmethionine (AdoMet) acting as the methyl donor (PubMed:10896953, PubMed:11319079). It has strict specificity for glycine and sarcosine as the methyl group acceptors (PubMed:11319079).</text>
</comment>
<comment type="catalytic activity">
    <reaction evidence="2 3">
        <text>glycine + 2 S-adenosyl-L-methionine = N,N-dimethylglycine + 2 S-adenosyl-L-homocysteine + 2 H(+)</text>
        <dbReference type="Rhea" id="RHEA:32463"/>
        <dbReference type="ChEBI" id="CHEBI:15378"/>
        <dbReference type="ChEBI" id="CHEBI:57305"/>
        <dbReference type="ChEBI" id="CHEBI:57856"/>
        <dbReference type="ChEBI" id="CHEBI:58251"/>
        <dbReference type="ChEBI" id="CHEBI:59789"/>
        <dbReference type="EC" id="2.1.1.156"/>
    </reaction>
    <physiologicalReaction direction="left-to-right" evidence="2 3">
        <dbReference type="Rhea" id="RHEA:32464"/>
    </physiologicalReaction>
</comment>
<comment type="catalytic activity">
    <reaction evidence="2 3">
        <text>glycine + S-adenosyl-L-methionine = sarcosine + S-adenosyl-L-homocysteine + H(+)</text>
        <dbReference type="Rhea" id="RHEA:19937"/>
        <dbReference type="ChEBI" id="CHEBI:15378"/>
        <dbReference type="ChEBI" id="CHEBI:57305"/>
        <dbReference type="ChEBI" id="CHEBI:57433"/>
        <dbReference type="ChEBI" id="CHEBI:57856"/>
        <dbReference type="ChEBI" id="CHEBI:59789"/>
    </reaction>
    <physiologicalReaction direction="left-to-right" evidence="2 3">
        <dbReference type="Rhea" id="RHEA:19938"/>
    </physiologicalReaction>
</comment>
<comment type="catalytic activity">
    <reaction evidence="2 3">
        <text>sarcosine + S-adenosyl-L-methionine = N,N-dimethylglycine + S-adenosyl-L-homocysteine + H(+)</text>
        <dbReference type="Rhea" id="RHEA:15453"/>
        <dbReference type="ChEBI" id="CHEBI:15378"/>
        <dbReference type="ChEBI" id="CHEBI:57433"/>
        <dbReference type="ChEBI" id="CHEBI:57856"/>
        <dbReference type="ChEBI" id="CHEBI:58251"/>
        <dbReference type="ChEBI" id="CHEBI:59789"/>
    </reaction>
    <physiologicalReaction direction="left-to-right" evidence="2 3">
        <dbReference type="Rhea" id="RHEA:15454"/>
    </physiologicalReaction>
</comment>
<comment type="activity regulation">
    <text evidence="3">p-chloromercuribenzoic acid inhibits more than 95% of the GSMT activities on glycine and sarcosine, and S-adenosylhomocysteine (AdoHcy) inhibits completely GSMT activities.</text>
</comment>
<comment type="biophysicochemical properties">
    <kinetics>
        <KM evidence="3">2.3 mM for sarcosine (at pH 7.4 and at 37 degrees Celsius)</KM>
        <KM evidence="3">18 mM for glycine (at pH 7.4 and at 37 degrees Celsius)</KM>
        <KM evidence="3">0.28 mM for AdoMet (with sarcosine at pH 7.4 and at 37 degrees Celsius)</KM>
        <KM evidence="3">0.42 mM for AdoMet (with glycine at pH 7.4 and at 37 degrees Celsius)</KM>
        <Vmax evidence="3">0.12 umol/min/mg enzyme with AdoMet as substrate (with sarcosine at pH 7.4 and at 37 degrees Celsius)</Vmax>
        <Vmax evidence="3">0.15 umol/min/mg enzyme with sarcosine as substrate (at pH 7.4 and at 37 degrees)</Vmax>
        <Vmax evidence="3">1.0 umol/min/mg enzyme with AdoMet as substrate (with glycine at pH 7.4 and at 37 degrees Celsius)</Vmax>
        <Vmax evidence="3">1.1 umol/min/mg enzyme with glycine as substrate (at pH 7.4 and at 37 degrees)</Vmax>
    </kinetics>
    <phDependence>
        <text evidence="3">Optimum pH is around 7.4 and 7.9 for glycine and sarcosine, respectively.</text>
    </phDependence>
</comment>
<comment type="pathway">
    <text evidence="6">Amine and polyamine biosynthesis; betaine biosynthesis via glycine pathway; betaine from glycine: step 1/3.</text>
</comment>
<comment type="pathway">
    <text evidence="6">Amine and polyamine biosynthesis; betaine biosynthesis via glycine pathway; betaine from glycine: step 2/3.</text>
</comment>
<comment type="subunit">
    <text evidence="3">Monomer.</text>
</comment>
<comment type="similarity">
    <text evidence="1">Belongs to the class I-like SAM-binding methyltransferase superfamily. Glycine N-methyltransferase family.</text>
</comment>
<accession>Q9KJ22</accession>
<sequence>MNTTTEQDFGADPTKVRDTDHYTEEYVDGFVDKWDDLIDWDSRAKSEGDFFIQELKKRGATRILDAATGTGFHSVRLLEAGFDVVSADGSAEMLAKAFENGRKRGHILRTVQVDWRWLNRDIHGRYDAIICLGNSFTHLFNEKDRRKTLAEFYSALNPEGVLILDQRNYDGILDHGYDSSHSYYYCGEGVSVYPEHVDDGLARFKYEFNDGSTYFLNMFPLRKDYTRRLMHEVGFQKIDTYGDFKATYRDADPDFFIHVAEKEYREED</sequence>
<dbReference type="EC" id="2.1.1.156" evidence="2 3"/>
<dbReference type="EMBL" id="AF216281">
    <property type="protein sequence ID" value="AAF87202.1"/>
    <property type="molecule type" value="Genomic_DNA"/>
</dbReference>
<dbReference type="RefSeq" id="WP_096409578.1">
    <property type="nucleotide sequence ID" value="NZ_AP017372.2"/>
</dbReference>
<dbReference type="SMR" id="Q9KJ22"/>
<dbReference type="STRING" id="1354791.M911_05560"/>
<dbReference type="KEGG" id="ag:AAF87202"/>
<dbReference type="OrthoDB" id="9772751at2"/>
<dbReference type="BioCyc" id="MetaCyc:MONOMER-8542"/>
<dbReference type="BRENDA" id="2.1.1.156">
    <property type="organism ID" value="2037"/>
</dbReference>
<dbReference type="UniPathway" id="UPA00530">
    <property type="reaction ID" value="UER00381"/>
</dbReference>
<dbReference type="UniPathway" id="UPA00530">
    <property type="reaction ID" value="UER00382"/>
</dbReference>
<dbReference type="GO" id="GO:0005829">
    <property type="term" value="C:cytosol"/>
    <property type="evidence" value="ECO:0007669"/>
    <property type="project" value="TreeGrafter"/>
</dbReference>
<dbReference type="GO" id="GO:0016594">
    <property type="term" value="F:glycine binding"/>
    <property type="evidence" value="ECO:0007669"/>
    <property type="project" value="TreeGrafter"/>
</dbReference>
<dbReference type="GO" id="GO:0017174">
    <property type="term" value="F:glycine N-methyltransferase activity"/>
    <property type="evidence" value="ECO:0007669"/>
    <property type="project" value="InterPro"/>
</dbReference>
<dbReference type="GO" id="GO:0042802">
    <property type="term" value="F:identical protein binding"/>
    <property type="evidence" value="ECO:0007669"/>
    <property type="project" value="TreeGrafter"/>
</dbReference>
<dbReference type="GO" id="GO:1904047">
    <property type="term" value="F:S-adenosyl-L-methionine binding"/>
    <property type="evidence" value="ECO:0007669"/>
    <property type="project" value="TreeGrafter"/>
</dbReference>
<dbReference type="GO" id="GO:0052730">
    <property type="term" value="F:sarcosine N-methyltransferase activity"/>
    <property type="evidence" value="ECO:0007669"/>
    <property type="project" value="RHEA"/>
</dbReference>
<dbReference type="GO" id="GO:0019286">
    <property type="term" value="P:glycine betaine biosynthetic process from glycine"/>
    <property type="evidence" value="ECO:0000314"/>
    <property type="project" value="UniProtKB"/>
</dbReference>
<dbReference type="GO" id="GO:0032259">
    <property type="term" value="P:methylation"/>
    <property type="evidence" value="ECO:0007669"/>
    <property type="project" value="UniProtKB-KW"/>
</dbReference>
<dbReference type="GO" id="GO:0006730">
    <property type="term" value="P:one-carbon metabolic process"/>
    <property type="evidence" value="ECO:0007669"/>
    <property type="project" value="TreeGrafter"/>
</dbReference>
<dbReference type="GO" id="GO:0051289">
    <property type="term" value="P:protein homotetramerization"/>
    <property type="evidence" value="ECO:0007669"/>
    <property type="project" value="TreeGrafter"/>
</dbReference>
<dbReference type="GO" id="GO:0006111">
    <property type="term" value="P:regulation of gluconeogenesis"/>
    <property type="evidence" value="ECO:0007669"/>
    <property type="project" value="TreeGrafter"/>
</dbReference>
<dbReference type="GO" id="GO:0046498">
    <property type="term" value="P:S-adenosylhomocysteine metabolic process"/>
    <property type="evidence" value="ECO:0007669"/>
    <property type="project" value="TreeGrafter"/>
</dbReference>
<dbReference type="GO" id="GO:0046500">
    <property type="term" value="P:S-adenosylmethionine metabolic process"/>
    <property type="evidence" value="ECO:0007669"/>
    <property type="project" value="TreeGrafter"/>
</dbReference>
<dbReference type="GO" id="GO:1901052">
    <property type="term" value="P:sarcosine metabolic process"/>
    <property type="evidence" value="ECO:0007669"/>
    <property type="project" value="TreeGrafter"/>
</dbReference>
<dbReference type="CDD" id="cd02440">
    <property type="entry name" value="AdoMet_MTases"/>
    <property type="match status" value="1"/>
</dbReference>
<dbReference type="Gene3D" id="3.30.46.10">
    <property type="entry name" value="Glycine N-methyltransferase, chain A, domain 1"/>
    <property type="match status" value="1"/>
</dbReference>
<dbReference type="Gene3D" id="3.40.50.150">
    <property type="entry name" value="Vaccinia Virus protein VP39"/>
    <property type="match status" value="1"/>
</dbReference>
<dbReference type="InterPro" id="IPR014369">
    <property type="entry name" value="Gly/Sar_N_MeTrfase"/>
</dbReference>
<dbReference type="InterPro" id="IPR041698">
    <property type="entry name" value="Methyltransf_25"/>
</dbReference>
<dbReference type="InterPro" id="IPR029063">
    <property type="entry name" value="SAM-dependent_MTases_sf"/>
</dbReference>
<dbReference type="PANTHER" id="PTHR16458">
    <property type="entry name" value="GLYCINE N-METHYLTRANSFERASE"/>
    <property type="match status" value="1"/>
</dbReference>
<dbReference type="PANTHER" id="PTHR16458:SF2">
    <property type="entry name" value="GLYCINE N-METHYLTRANSFERASE"/>
    <property type="match status" value="1"/>
</dbReference>
<dbReference type="Pfam" id="PF13649">
    <property type="entry name" value="Methyltransf_25"/>
    <property type="match status" value="1"/>
</dbReference>
<dbReference type="PIRSF" id="PIRSF000385">
    <property type="entry name" value="Gly_N-mtase"/>
    <property type="match status" value="1"/>
</dbReference>
<dbReference type="SUPFAM" id="SSF53335">
    <property type="entry name" value="S-adenosyl-L-methionine-dependent methyltransferases"/>
    <property type="match status" value="1"/>
</dbReference>
<dbReference type="PROSITE" id="PS51600">
    <property type="entry name" value="SAM_GNMT"/>
    <property type="match status" value="1"/>
</dbReference>
<reference key="1">
    <citation type="journal article" date="2000" name="J. Biol. Chem.">
        <title>Extreme halophiles synthesize betaine from glycine by methylation.</title>
        <authorList>
            <person name="Nyyssola A."/>
            <person name="Kerovuo J."/>
            <person name="Kaukinen P."/>
            <person name="von Weymarn N."/>
            <person name="Reinikainen T."/>
        </authorList>
    </citation>
    <scope>NUCLEOTIDE SEQUENCE [GENOMIC DNA]</scope>
    <scope>FUNCTION</scope>
    <scope>CATALYTIC ACTIVITY</scope>
    <source>
        <strain>ATCC 35916</strain>
    </source>
</reference>
<reference key="2">
    <citation type="journal article" date="2001" name="Appl. Environ. Microbiol.">
        <title>Characterization of glycine sarcosine N-methyltransferase and sarcosine dimethylglycine N-methyltransferase.</title>
        <authorList>
            <person name="Nyyssola A."/>
            <person name="Reinikainen T."/>
            <person name="Leisola M."/>
        </authorList>
    </citation>
    <scope>FUNCTION AS A METHYLTRANSFERASE AND IN BETAINE BIOSYNTHESIS</scope>
    <scope>CATALYTIC ACTIVITY</scope>
    <scope>SUBSTRATE SPECIFICITY</scope>
    <scope>ACTIVITY REGULATION</scope>
    <scope>BIOPHYSICOCHEMICAL PROPERTIES</scope>
    <scope>SUBUNIT</scope>
</reference>
<keyword id="KW-0489">Methyltransferase</keyword>
<keyword id="KW-0949">S-adenosyl-L-methionine</keyword>
<keyword id="KW-0808">Transferase</keyword>